<reference key="1">
    <citation type="journal article" date="2007" name="J. Bacteriol.">
        <title>Genome of the opportunistic pathogen Streptococcus sanguinis.</title>
        <authorList>
            <person name="Xu P."/>
            <person name="Alves J.M."/>
            <person name="Kitten T."/>
            <person name="Brown A."/>
            <person name="Chen Z."/>
            <person name="Ozaki L.S."/>
            <person name="Manque P."/>
            <person name="Ge X."/>
            <person name="Serrano M.G."/>
            <person name="Puiu D."/>
            <person name="Hendricks S."/>
            <person name="Wang Y."/>
            <person name="Chaplin M.D."/>
            <person name="Akan D."/>
            <person name="Paik S."/>
            <person name="Peterson D.L."/>
            <person name="Macrina F.L."/>
            <person name="Buck G.A."/>
        </authorList>
    </citation>
    <scope>NUCLEOTIDE SEQUENCE [LARGE SCALE GENOMIC DNA]</scope>
    <source>
        <strain>SK36</strain>
    </source>
</reference>
<protein>
    <recommendedName>
        <fullName evidence="1">Large ribosomal subunit protein uL18</fullName>
    </recommendedName>
    <alternativeName>
        <fullName evidence="3">50S ribosomal protein L18</fullName>
    </alternativeName>
</protein>
<keyword id="KW-1185">Reference proteome</keyword>
<keyword id="KW-0687">Ribonucleoprotein</keyword>
<keyword id="KW-0689">Ribosomal protein</keyword>
<keyword id="KW-0694">RNA-binding</keyword>
<keyword id="KW-0699">rRNA-binding</keyword>
<gene>
    <name evidence="1" type="primary">rplR</name>
    <name type="ordered locus">SSA_0123</name>
</gene>
<evidence type="ECO:0000255" key="1">
    <source>
        <dbReference type="HAMAP-Rule" id="MF_01337"/>
    </source>
</evidence>
<evidence type="ECO:0000256" key="2">
    <source>
        <dbReference type="SAM" id="MobiDB-lite"/>
    </source>
</evidence>
<evidence type="ECO:0000305" key="3"/>
<name>RL18_STRSV</name>
<feature type="chain" id="PRO_1000053123" description="Large ribosomal subunit protein uL18">
    <location>
        <begin position="1"/>
        <end position="118"/>
    </location>
</feature>
<feature type="region of interest" description="Disordered" evidence="2">
    <location>
        <begin position="1"/>
        <end position="24"/>
    </location>
</feature>
<feature type="compositionally biased region" description="Basic residues" evidence="2">
    <location>
        <begin position="10"/>
        <end position="20"/>
    </location>
</feature>
<comment type="function">
    <text evidence="1">This is one of the proteins that bind and probably mediate the attachment of the 5S RNA into the large ribosomal subunit, where it forms part of the central protuberance.</text>
</comment>
<comment type="subunit">
    <text evidence="1">Part of the 50S ribosomal subunit; part of the 5S rRNA/L5/L18/L25 subcomplex. Contacts the 5S and 23S rRNAs.</text>
</comment>
<comment type="similarity">
    <text evidence="1">Belongs to the universal ribosomal protein uL18 family.</text>
</comment>
<proteinExistence type="inferred from homology"/>
<dbReference type="EMBL" id="CP000387">
    <property type="protein sequence ID" value="ABN43585.1"/>
    <property type="molecule type" value="Genomic_DNA"/>
</dbReference>
<dbReference type="RefSeq" id="WP_009659213.1">
    <property type="nucleotide sequence ID" value="NZ_CAXTYR010000005.1"/>
</dbReference>
<dbReference type="RefSeq" id="YP_001034135.1">
    <property type="nucleotide sequence ID" value="NC_009009.1"/>
</dbReference>
<dbReference type="SMR" id="A3CK80"/>
<dbReference type="STRING" id="388919.SSA_0123"/>
<dbReference type="GeneID" id="48426569"/>
<dbReference type="KEGG" id="ssa:SSA_0123"/>
<dbReference type="PATRIC" id="fig|388919.9.peg.117"/>
<dbReference type="eggNOG" id="COG0256">
    <property type="taxonomic scope" value="Bacteria"/>
</dbReference>
<dbReference type="HOGENOM" id="CLU_098841_0_1_9"/>
<dbReference type="OrthoDB" id="9810939at2"/>
<dbReference type="Proteomes" id="UP000002148">
    <property type="component" value="Chromosome"/>
</dbReference>
<dbReference type="GO" id="GO:0022625">
    <property type="term" value="C:cytosolic large ribosomal subunit"/>
    <property type="evidence" value="ECO:0007669"/>
    <property type="project" value="TreeGrafter"/>
</dbReference>
<dbReference type="GO" id="GO:0008097">
    <property type="term" value="F:5S rRNA binding"/>
    <property type="evidence" value="ECO:0007669"/>
    <property type="project" value="TreeGrafter"/>
</dbReference>
<dbReference type="GO" id="GO:0003735">
    <property type="term" value="F:structural constituent of ribosome"/>
    <property type="evidence" value="ECO:0007669"/>
    <property type="project" value="InterPro"/>
</dbReference>
<dbReference type="GO" id="GO:0006412">
    <property type="term" value="P:translation"/>
    <property type="evidence" value="ECO:0007669"/>
    <property type="project" value="UniProtKB-UniRule"/>
</dbReference>
<dbReference type="CDD" id="cd00432">
    <property type="entry name" value="Ribosomal_L18_L5e"/>
    <property type="match status" value="1"/>
</dbReference>
<dbReference type="FunFam" id="3.30.420.100:FF:000001">
    <property type="entry name" value="50S ribosomal protein L18"/>
    <property type="match status" value="1"/>
</dbReference>
<dbReference type="Gene3D" id="3.30.420.100">
    <property type="match status" value="1"/>
</dbReference>
<dbReference type="HAMAP" id="MF_01337_B">
    <property type="entry name" value="Ribosomal_uL18_B"/>
    <property type="match status" value="1"/>
</dbReference>
<dbReference type="InterPro" id="IPR004389">
    <property type="entry name" value="Ribosomal_uL18_bac-type"/>
</dbReference>
<dbReference type="InterPro" id="IPR005484">
    <property type="entry name" value="Ribosomal_uL18_bac/euk"/>
</dbReference>
<dbReference type="NCBIfam" id="TIGR00060">
    <property type="entry name" value="L18_bact"/>
    <property type="match status" value="1"/>
</dbReference>
<dbReference type="PANTHER" id="PTHR12899">
    <property type="entry name" value="39S RIBOSOMAL PROTEIN L18, MITOCHONDRIAL"/>
    <property type="match status" value="1"/>
</dbReference>
<dbReference type="PANTHER" id="PTHR12899:SF3">
    <property type="entry name" value="LARGE RIBOSOMAL SUBUNIT PROTEIN UL18M"/>
    <property type="match status" value="1"/>
</dbReference>
<dbReference type="Pfam" id="PF00861">
    <property type="entry name" value="Ribosomal_L18p"/>
    <property type="match status" value="1"/>
</dbReference>
<dbReference type="SUPFAM" id="SSF53137">
    <property type="entry name" value="Translational machinery components"/>
    <property type="match status" value="1"/>
</dbReference>
<accession>A3CK80</accession>
<sequence>MITKPDKNKIRQKRHRRVRGKLSGTADRPRLNVFRSNTGIYAQVIDDVAGVTLASASTLDKEVSKGTKTEQAVVVGKLVAERAVAKGISEVVFDRGGYLYHGRVKALADAARENGLKF</sequence>
<organism>
    <name type="scientific">Streptococcus sanguinis (strain SK36)</name>
    <dbReference type="NCBI Taxonomy" id="388919"/>
    <lineage>
        <taxon>Bacteria</taxon>
        <taxon>Bacillati</taxon>
        <taxon>Bacillota</taxon>
        <taxon>Bacilli</taxon>
        <taxon>Lactobacillales</taxon>
        <taxon>Streptococcaceae</taxon>
        <taxon>Streptococcus</taxon>
    </lineage>
</organism>